<sequence>MKQIQVDLANRSYPIHIGPNLFEDQELFAPVVSGKKVLVVSNETIAPLYLDKISATLSARAAQVASVILPDGEQYKTLDYLNEIFDALLEGNFARDCVLVALGGGVIGDMTGFAAACYQRGVDFIQIPTTLLSQVDSSVGGKTAVNHPLGKNMIGAFYQPKLVVIDINCLKTLPAREFAAGMAEVIKYGIIRDSELFTWLEQNVSALKALDQDAIIHVIARCCEIKAEVVSEDETEQGVRALLNLGHTFGHAIEAEMGYGNWLHGEAVAAGMVLAAQTSVTLGLIDKSILCRIAALIQAFDLPVQAPESMDFNSFIKHMRRDKKVLGGQLRLVLPLGIGAAEVSSQASDAELAEVIRRP</sequence>
<keyword id="KW-0028">Amino-acid biosynthesis</keyword>
<keyword id="KW-0057">Aromatic amino acid biosynthesis</keyword>
<keyword id="KW-0170">Cobalt</keyword>
<keyword id="KW-0963">Cytoplasm</keyword>
<keyword id="KW-0456">Lyase</keyword>
<keyword id="KW-0479">Metal-binding</keyword>
<keyword id="KW-0520">NAD</keyword>
<keyword id="KW-0547">Nucleotide-binding</keyword>
<keyword id="KW-1185">Reference proteome</keyword>
<keyword id="KW-0862">Zinc</keyword>
<gene>
    <name evidence="1" type="primary">aroB</name>
    <name type="ordered locus">Sama_3367</name>
</gene>
<reference key="1">
    <citation type="submission" date="2006-12" db="EMBL/GenBank/DDBJ databases">
        <title>Complete sequence of Shewanella amazonensis SB2B.</title>
        <authorList>
            <consortium name="US DOE Joint Genome Institute"/>
            <person name="Copeland A."/>
            <person name="Lucas S."/>
            <person name="Lapidus A."/>
            <person name="Barry K."/>
            <person name="Detter J.C."/>
            <person name="Glavina del Rio T."/>
            <person name="Hammon N."/>
            <person name="Israni S."/>
            <person name="Dalin E."/>
            <person name="Tice H."/>
            <person name="Pitluck S."/>
            <person name="Munk A.C."/>
            <person name="Brettin T."/>
            <person name="Bruce D."/>
            <person name="Han C."/>
            <person name="Tapia R."/>
            <person name="Gilna P."/>
            <person name="Schmutz J."/>
            <person name="Larimer F."/>
            <person name="Land M."/>
            <person name="Hauser L."/>
            <person name="Kyrpides N."/>
            <person name="Mikhailova N."/>
            <person name="Fredrickson J."/>
            <person name="Richardson P."/>
        </authorList>
    </citation>
    <scope>NUCLEOTIDE SEQUENCE [LARGE SCALE GENOMIC DNA]</scope>
    <source>
        <strain>ATCC BAA-1098 / SB2B</strain>
    </source>
</reference>
<proteinExistence type="inferred from homology"/>
<accession>A1SB13</accession>
<protein>
    <recommendedName>
        <fullName evidence="1">3-dehydroquinate synthase</fullName>
        <shortName evidence="1">DHQS</shortName>
        <ecNumber evidence="1">4.2.3.4</ecNumber>
    </recommendedName>
</protein>
<name>AROB_SHEAM</name>
<feature type="chain" id="PRO_1000094605" description="3-dehydroquinate synthase">
    <location>
        <begin position="1"/>
        <end position="359"/>
    </location>
</feature>
<feature type="binding site" evidence="1">
    <location>
        <begin position="71"/>
        <end position="76"/>
    </location>
    <ligand>
        <name>NAD(+)</name>
        <dbReference type="ChEBI" id="CHEBI:57540"/>
    </ligand>
</feature>
<feature type="binding site" evidence="1">
    <location>
        <begin position="105"/>
        <end position="109"/>
    </location>
    <ligand>
        <name>NAD(+)</name>
        <dbReference type="ChEBI" id="CHEBI:57540"/>
    </ligand>
</feature>
<feature type="binding site" evidence="1">
    <location>
        <begin position="129"/>
        <end position="130"/>
    </location>
    <ligand>
        <name>NAD(+)</name>
        <dbReference type="ChEBI" id="CHEBI:57540"/>
    </ligand>
</feature>
<feature type="binding site" evidence="1">
    <location>
        <position position="142"/>
    </location>
    <ligand>
        <name>NAD(+)</name>
        <dbReference type="ChEBI" id="CHEBI:57540"/>
    </ligand>
</feature>
<feature type="binding site" evidence="1">
    <location>
        <position position="151"/>
    </location>
    <ligand>
        <name>NAD(+)</name>
        <dbReference type="ChEBI" id="CHEBI:57540"/>
    </ligand>
</feature>
<feature type="binding site" evidence="1">
    <location>
        <begin position="169"/>
        <end position="172"/>
    </location>
    <ligand>
        <name>NAD(+)</name>
        <dbReference type="ChEBI" id="CHEBI:57540"/>
    </ligand>
</feature>
<feature type="binding site" evidence="1">
    <location>
        <position position="184"/>
    </location>
    <ligand>
        <name>Zn(2+)</name>
        <dbReference type="ChEBI" id="CHEBI:29105"/>
    </ligand>
</feature>
<feature type="binding site" evidence="1">
    <location>
        <position position="247"/>
    </location>
    <ligand>
        <name>Zn(2+)</name>
        <dbReference type="ChEBI" id="CHEBI:29105"/>
    </ligand>
</feature>
<feature type="binding site" evidence="1">
    <location>
        <position position="264"/>
    </location>
    <ligand>
        <name>Zn(2+)</name>
        <dbReference type="ChEBI" id="CHEBI:29105"/>
    </ligand>
</feature>
<evidence type="ECO:0000255" key="1">
    <source>
        <dbReference type="HAMAP-Rule" id="MF_00110"/>
    </source>
</evidence>
<dbReference type="EC" id="4.2.3.4" evidence="1"/>
<dbReference type="EMBL" id="CP000507">
    <property type="protein sequence ID" value="ABM01570.1"/>
    <property type="molecule type" value="Genomic_DNA"/>
</dbReference>
<dbReference type="RefSeq" id="WP_011761474.1">
    <property type="nucleotide sequence ID" value="NC_008700.1"/>
</dbReference>
<dbReference type="SMR" id="A1SB13"/>
<dbReference type="STRING" id="326297.Sama_3367"/>
<dbReference type="KEGG" id="saz:Sama_3367"/>
<dbReference type="eggNOG" id="COG0337">
    <property type="taxonomic scope" value="Bacteria"/>
</dbReference>
<dbReference type="HOGENOM" id="CLU_001201_0_2_6"/>
<dbReference type="OrthoDB" id="9806583at2"/>
<dbReference type="UniPathway" id="UPA00053">
    <property type="reaction ID" value="UER00085"/>
</dbReference>
<dbReference type="Proteomes" id="UP000009175">
    <property type="component" value="Chromosome"/>
</dbReference>
<dbReference type="GO" id="GO:0005737">
    <property type="term" value="C:cytoplasm"/>
    <property type="evidence" value="ECO:0007669"/>
    <property type="project" value="UniProtKB-SubCell"/>
</dbReference>
<dbReference type="GO" id="GO:0003856">
    <property type="term" value="F:3-dehydroquinate synthase activity"/>
    <property type="evidence" value="ECO:0007669"/>
    <property type="project" value="UniProtKB-UniRule"/>
</dbReference>
<dbReference type="GO" id="GO:0046872">
    <property type="term" value="F:metal ion binding"/>
    <property type="evidence" value="ECO:0007669"/>
    <property type="project" value="UniProtKB-KW"/>
</dbReference>
<dbReference type="GO" id="GO:0000166">
    <property type="term" value="F:nucleotide binding"/>
    <property type="evidence" value="ECO:0007669"/>
    <property type="project" value="UniProtKB-KW"/>
</dbReference>
<dbReference type="GO" id="GO:0008652">
    <property type="term" value="P:amino acid biosynthetic process"/>
    <property type="evidence" value="ECO:0007669"/>
    <property type="project" value="UniProtKB-KW"/>
</dbReference>
<dbReference type="GO" id="GO:0009073">
    <property type="term" value="P:aromatic amino acid family biosynthetic process"/>
    <property type="evidence" value="ECO:0007669"/>
    <property type="project" value="UniProtKB-KW"/>
</dbReference>
<dbReference type="GO" id="GO:0009423">
    <property type="term" value="P:chorismate biosynthetic process"/>
    <property type="evidence" value="ECO:0007669"/>
    <property type="project" value="UniProtKB-UniRule"/>
</dbReference>
<dbReference type="CDD" id="cd08195">
    <property type="entry name" value="DHQS"/>
    <property type="match status" value="1"/>
</dbReference>
<dbReference type="FunFam" id="1.20.1090.10:FF:000002">
    <property type="entry name" value="3-dehydroquinate synthase"/>
    <property type="match status" value="1"/>
</dbReference>
<dbReference type="FunFam" id="3.40.50.1970:FF:000001">
    <property type="entry name" value="3-dehydroquinate synthase"/>
    <property type="match status" value="1"/>
</dbReference>
<dbReference type="Gene3D" id="3.40.50.1970">
    <property type="match status" value="1"/>
</dbReference>
<dbReference type="Gene3D" id="1.20.1090.10">
    <property type="entry name" value="Dehydroquinate synthase-like - alpha domain"/>
    <property type="match status" value="1"/>
</dbReference>
<dbReference type="HAMAP" id="MF_00110">
    <property type="entry name" value="DHQ_synthase"/>
    <property type="match status" value="1"/>
</dbReference>
<dbReference type="InterPro" id="IPR050071">
    <property type="entry name" value="Dehydroquinate_synthase"/>
</dbReference>
<dbReference type="InterPro" id="IPR016037">
    <property type="entry name" value="DHQ_synth_AroB"/>
</dbReference>
<dbReference type="InterPro" id="IPR030963">
    <property type="entry name" value="DHQ_synth_fam"/>
</dbReference>
<dbReference type="InterPro" id="IPR030960">
    <property type="entry name" value="DHQS/DOIS_N"/>
</dbReference>
<dbReference type="InterPro" id="IPR056179">
    <property type="entry name" value="DHQS_C"/>
</dbReference>
<dbReference type="NCBIfam" id="TIGR01357">
    <property type="entry name" value="aroB"/>
    <property type="match status" value="1"/>
</dbReference>
<dbReference type="PANTHER" id="PTHR43622">
    <property type="entry name" value="3-DEHYDROQUINATE SYNTHASE"/>
    <property type="match status" value="1"/>
</dbReference>
<dbReference type="PANTHER" id="PTHR43622:SF7">
    <property type="entry name" value="3-DEHYDROQUINATE SYNTHASE, CHLOROPLASTIC"/>
    <property type="match status" value="1"/>
</dbReference>
<dbReference type="Pfam" id="PF01761">
    <property type="entry name" value="DHQ_synthase"/>
    <property type="match status" value="1"/>
</dbReference>
<dbReference type="Pfam" id="PF24621">
    <property type="entry name" value="DHQS_C"/>
    <property type="match status" value="1"/>
</dbReference>
<dbReference type="PIRSF" id="PIRSF001455">
    <property type="entry name" value="DHQ_synth"/>
    <property type="match status" value="1"/>
</dbReference>
<dbReference type="SUPFAM" id="SSF56796">
    <property type="entry name" value="Dehydroquinate synthase-like"/>
    <property type="match status" value="1"/>
</dbReference>
<organism>
    <name type="scientific">Shewanella amazonensis (strain ATCC BAA-1098 / SB2B)</name>
    <dbReference type="NCBI Taxonomy" id="326297"/>
    <lineage>
        <taxon>Bacteria</taxon>
        <taxon>Pseudomonadati</taxon>
        <taxon>Pseudomonadota</taxon>
        <taxon>Gammaproteobacteria</taxon>
        <taxon>Alteromonadales</taxon>
        <taxon>Shewanellaceae</taxon>
        <taxon>Shewanella</taxon>
    </lineage>
</organism>
<comment type="function">
    <text evidence="1">Catalyzes the conversion of 3-deoxy-D-arabino-heptulosonate 7-phosphate (DAHP) to dehydroquinate (DHQ).</text>
</comment>
<comment type="catalytic activity">
    <reaction evidence="1">
        <text>7-phospho-2-dehydro-3-deoxy-D-arabino-heptonate = 3-dehydroquinate + phosphate</text>
        <dbReference type="Rhea" id="RHEA:21968"/>
        <dbReference type="ChEBI" id="CHEBI:32364"/>
        <dbReference type="ChEBI" id="CHEBI:43474"/>
        <dbReference type="ChEBI" id="CHEBI:58394"/>
        <dbReference type="EC" id="4.2.3.4"/>
    </reaction>
</comment>
<comment type="cofactor">
    <cofactor evidence="1">
        <name>Co(2+)</name>
        <dbReference type="ChEBI" id="CHEBI:48828"/>
    </cofactor>
    <cofactor evidence="1">
        <name>Zn(2+)</name>
        <dbReference type="ChEBI" id="CHEBI:29105"/>
    </cofactor>
    <text evidence="1">Binds 1 divalent metal cation per subunit. Can use either Co(2+) or Zn(2+).</text>
</comment>
<comment type="cofactor">
    <cofactor evidence="1">
        <name>NAD(+)</name>
        <dbReference type="ChEBI" id="CHEBI:57540"/>
    </cofactor>
</comment>
<comment type="pathway">
    <text evidence="1">Metabolic intermediate biosynthesis; chorismate biosynthesis; chorismate from D-erythrose 4-phosphate and phosphoenolpyruvate: step 2/7.</text>
</comment>
<comment type="subcellular location">
    <subcellularLocation>
        <location evidence="1">Cytoplasm</location>
    </subcellularLocation>
</comment>
<comment type="similarity">
    <text evidence="1">Belongs to the sugar phosphate cyclases superfamily. Dehydroquinate synthase family.</text>
</comment>